<name>CFA73_CHLRE</name>
<accession>M1V4Y8</accession>
<accession>A8JB86</accession>
<sequence length="308" mass="35614">MDEEGSATARAKMMPQTLVLDHVSPATRLLEKRRQMFEVQEALEAQKQDFNRKEEVFKRREEALKLKDLELQESLIRFSKFLQENDSKRARAEKKANDEIKARIQKEKEIEQLTEVLEELKSEKERILEVLEKNMRYQHYLESVLEVADEYQEVADLLLRHATLSATNADLKDHQRKCSELAEKVRTELQIYVKQKTDEILNLNNQVAKLKTELEGYEAEAMVQEAKKDSSLQIASQRTLEYGQVVLSADNIFNRCRSKSSIGHPAESNPLHQLDVIGNFVSDLGSIIKQFKQEQAKRASLASRAEIE</sequence>
<keyword id="KW-0002">3D-structure</keyword>
<keyword id="KW-0966">Cell projection</keyword>
<keyword id="KW-0969">Cilium</keyword>
<keyword id="KW-0175">Coiled coil</keyword>
<keyword id="KW-0963">Cytoplasm</keyword>
<keyword id="KW-0206">Cytoskeleton</keyword>
<keyword id="KW-0282">Flagellum</keyword>
<organism>
    <name type="scientific">Chlamydomonas reinhardtii</name>
    <name type="common">Chlamydomonas smithii</name>
    <dbReference type="NCBI Taxonomy" id="3055"/>
    <lineage>
        <taxon>Eukaryota</taxon>
        <taxon>Viridiplantae</taxon>
        <taxon>Chlorophyta</taxon>
        <taxon>core chlorophytes</taxon>
        <taxon>Chlorophyceae</taxon>
        <taxon>CS clade</taxon>
        <taxon>Chlamydomonadales</taxon>
        <taxon>Chlamydomonadaceae</taxon>
        <taxon>Chlamydomonas</taxon>
    </lineage>
</organism>
<evidence type="ECO:0000255" key="1"/>
<evidence type="ECO:0000269" key="2">
    <source>
    </source>
</evidence>
<evidence type="ECO:0000303" key="3">
    <source>
    </source>
</evidence>
<evidence type="ECO:0000305" key="4"/>
<evidence type="ECO:0000305" key="5">
    <source>
    </source>
</evidence>
<protein>
    <recommendedName>
        <fullName evidence="4">Cilia- and flagella-associated protein 73</fullName>
    </recommendedName>
    <alternativeName>
        <fullName evidence="5">Flagella-associated protein 73</fullName>
    </alternativeName>
    <alternativeName>
        <fullName evidence="3">Modifier of inner arms 2 protein</fullName>
        <shortName evidence="3">Mia2p</shortName>
    </alternativeName>
</protein>
<proteinExistence type="evidence at protein level"/>
<feature type="chain" id="PRO_0000437482" description="Cilia- and flagella-associated protein 73">
    <location>
        <begin position="1"/>
        <end position="308"/>
    </location>
</feature>
<feature type="coiled-coil region" evidence="1">
    <location>
        <begin position="103"/>
        <end position="134"/>
    </location>
</feature>
<feature type="coiled-coil region" evidence="1">
    <location>
        <begin position="164"/>
        <end position="227"/>
    </location>
</feature>
<reference key="1">
    <citation type="journal article" date="2013" name="J. Cell Biol.">
        <title>The MIA complex is a conserved and novel dynein regulator essential for normal ciliary motility.</title>
        <authorList>
            <person name="Yamamoto R."/>
            <person name="Song K."/>
            <person name="Yanagisawa H."/>
            <person name="Fox L."/>
            <person name="Yagi T."/>
            <person name="Wirschell M."/>
            <person name="Hirono M."/>
            <person name="Kamiya R."/>
            <person name="Nicastro D."/>
            <person name="Sale W.S."/>
        </authorList>
    </citation>
    <scope>NUCLEOTIDE SEQUENCE [MRNA]</scope>
    <scope>FUNCTION</scope>
    <scope>INTERACTION WITH FAP100</scope>
    <scope>SUBCELLULAR LOCATION</scope>
    <scope>DISRUPTION PHENOTYPE</scope>
</reference>
<reference key="2">
    <citation type="journal article" date="2007" name="Science">
        <title>The Chlamydomonas genome reveals the evolution of key animal and plant functions.</title>
        <authorList>
            <person name="Merchant S.S."/>
            <person name="Prochnik S.E."/>
            <person name="Vallon O."/>
            <person name="Harris E.H."/>
            <person name="Karpowicz S.J."/>
            <person name="Witman G.B."/>
            <person name="Terry A."/>
            <person name="Salamov A."/>
            <person name="Fritz-Laylin L.K."/>
            <person name="Marechal-Drouard L."/>
            <person name="Marshall W.F."/>
            <person name="Qu L.H."/>
            <person name="Nelson D.R."/>
            <person name="Sanderfoot A.A."/>
            <person name="Spalding M.H."/>
            <person name="Kapitonov V.V."/>
            <person name="Ren Q."/>
            <person name="Ferris P."/>
            <person name="Lindquist E."/>
            <person name="Shapiro H."/>
            <person name="Lucas S.M."/>
            <person name="Grimwood J."/>
            <person name="Schmutz J."/>
            <person name="Cardol P."/>
            <person name="Cerutti H."/>
            <person name="Chanfreau G."/>
            <person name="Chen C.L."/>
            <person name="Cognat V."/>
            <person name="Croft M.T."/>
            <person name="Dent R."/>
            <person name="Dutcher S."/>
            <person name="Fernandez E."/>
            <person name="Fukuzawa H."/>
            <person name="Gonzalez-Ballester D."/>
            <person name="Gonzalez-Halphen D."/>
            <person name="Hallmann A."/>
            <person name="Hanikenne M."/>
            <person name="Hippler M."/>
            <person name="Inwood W."/>
            <person name="Jabbari K."/>
            <person name="Kalanon M."/>
            <person name="Kuras R."/>
            <person name="Lefebvre P.A."/>
            <person name="Lemaire S.D."/>
            <person name="Lobanov A.V."/>
            <person name="Lohr M."/>
            <person name="Manuell A."/>
            <person name="Meier I."/>
            <person name="Mets L."/>
            <person name="Mittag M."/>
            <person name="Mittelmeier T."/>
            <person name="Moroney J.V."/>
            <person name="Moseley J."/>
            <person name="Napoli C."/>
            <person name="Nedelcu A.M."/>
            <person name="Niyogi K."/>
            <person name="Novoselov S.V."/>
            <person name="Paulsen I.T."/>
            <person name="Pazour G.J."/>
            <person name="Purton S."/>
            <person name="Ral J.P."/>
            <person name="Riano-Pachon D.M."/>
            <person name="Riekhof W."/>
            <person name="Rymarquis L."/>
            <person name="Schroda M."/>
            <person name="Stern D."/>
            <person name="Umen J."/>
            <person name="Willows R."/>
            <person name="Wilson N."/>
            <person name="Zimmer S.L."/>
            <person name="Allmer J."/>
            <person name="Balk J."/>
            <person name="Bisova K."/>
            <person name="Chen C.J."/>
            <person name="Elias M."/>
            <person name="Gendler K."/>
            <person name="Hauser C."/>
            <person name="Lamb M.R."/>
            <person name="Ledford H."/>
            <person name="Long J.C."/>
            <person name="Minagawa J."/>
            <person name="Page M.D."/>
            <person name="Pan J."/>
            <person name="Pootakham W."/>
            <person name="Roje S."/>
            <person name="Rose A."/>
            <person name="Stahlberg E."/>
            <person name="Terauchi A.M."/>
            <person name="Yang P."/>
            <person name="Ball S."/>
            <person name="Bowler C."/>
            <person name="Dieckmann C.L."/>
            <person name="Gladyshev V.N."/>
            <person name="Green P."/>
            <person name="Jorgensen R."/>
            <person name="Mayfield S."/>
            <person name="Mueller-Roeber B."/>
            <person name="Rajamani S."/>
            <person name="Sayre R.T."/>
            <person name="Brokstein P."/>
            <person name="Dubchak I."/>
            <person name="Goodstein D."/>
            <person name="Hornick L."/>
            <person name="Huang Y.W."/>
            <person name="Jhaveri J."/>
            <person name="Luo Y."/>
            <person name="Martinez D."/>
            <person name="Ngau W.C."/>
            <person name="Otillar B."/>
            <person name="Poliakov A."/>
            <person name="Porter A."/>
            <person name="Szajkowski L."/>
            <person name="Werner G."/>
            <person name="Zhou K."/>
            <person name="Grigoriev I.V."/>
            <person name="Rokhsar D.S."/>
            <person name="Grossman A.R."/>
        </authorList>
    </citation>
    <scope>NUCLEOTIDE SEQUENCE [LARGE SCALE GENOMIC DNA] OF 14-253</scope>
    <source>
        <strain>CC-503</strain>
    </source>
</reference>
<dbReference type="EMBL" id="AB692781">
    <property type="protein sequence ID" value="BAM95826.1"/>
    <property type="molecule type" value="mRNA"/>
</dbReference>
<dbReference type="EMBL" id="DS496152">
    <property type="protein sequence ID" value="EDO98890.1"/>
    <property type="molecule type" value="Genomic_DNA"/>
</dbReference>
<dbReference type="RefSeq" id="XP_001699250.1">
    <property type="nucleotide sequence ID" value="XM_001699198.1"/>
</dbReference>
<dbReference type="PDB" id="8GLV">
    <property type="method" value="EM"/>
    <property type="resolution" value="3.10 A"/>
    <property type="chains" value="AV=1-308"/>
</dbReference>
<dbReference type="PDBsum" id="8GLV"/>
<dbReference type="EMDB" id="EMD-40220"/>
<dbReference type="SMR" id="M1V4Y8"/>
<dbReference type="PaxDb" id="3055-EDO98890"/>
<dbReference type="EnsemblPlants" id="PNW71820">
    <property type="protein sequence ID" value="PNW71820"/>
    <property type="gene ID" value="CHLRE_16g689600v5"/>
</dbReference>
<dbReference type="Gramene" id="PNW71820">
    <property type="protein sequence ID" value="PNW71820"/>
    <property type="gene ID" value="CHLRE_16g689600v5"/>
</dbReference>
<dbReference type="KEGG" id="cre:CHLRE_16g689600v5"/>
<dbReference type="eggNOG" id="ENOG502QRZS">
    <property type="taxonomic scope" value="Eukaryota"/>
</dbReference>
<dbReference type="OMA" id="CADKKRV"/>
<dbReference type="OrthoDB" id="10264298at2759"/>
<dbReference type="GO" id="GO:0097545">
    <property type="term" value="C:axonemal doublet microtubule"/>
    <property type="evidence" value="ECO:0000314"/>
    <property type="project" value="UniProtKB"/>
</dbReference>
<dbReference type="GO" id="GO:0031514">
    <property type="term" value="C:motile cilium"/>
    <property type="evidence" value="ECO:0000314"/>
    <property type="project" value="UniProtKB"/>
</dbReference>
<dbReference type="GO" id="GO:0070840">
    <property type="term" value="F:dynein complex binding"/>
    <property type="evidence" value="ECO:0000314"/>
    <property type="project" value="UniProtKB"/>
</dbReference>
<dbReference type="GO" id="GO:0048870">
    <property type="term" value="P:cell motility"/>
    <property type="evidence" value="ECO:0000315"/>
    <property type="project" value="UniProtKB"/>
</dbReference>
<dbReference type="GO" id="GO:0003341">
    <property type="term" value="P:cilium movement"/>
    <property type="evidence" value="ECO:0000315"/>
    <property type="project" value="UniProtKB"/>
</dbReference>
<dbReference type="GO" id="GO:0036159">
    <property type="term" value="P:inner dynein arm assembly"/>
    <property type="evidence" value="ECO:0000315"/>
    <property type="project" value="UniProtKB"/>
</dbReference>
<dbReference type="InterPro" id="IPR051147">
    <property type="entry name" value="CFAP_domain-containing"/>
</dbReference>
<dbReference type="InterPro" id="IPR025252">
    <property type="entry name" value="DUF4200"/>
</dbReference>
<dbReference type="PANTHER" id="PTHR21683:SF2">
    <property type="entry name" value="COILED-COIL DOMAIN-CONTAINING PROTEIN 42 LIKE-2-LIKE"/>
    <property type="match status" value="1"/>
</dbReference>
<dbReference type="PANTHER" id="PTHR21683">
    <property type="entry name" value="COILED-COIL DOMAIN-CONTAINING PROTEIN 42 LIKE-2-LIKE-RELATED"/>
    <property type="match status" value="1"/>
</dbReference>
<dbReference type="Pfam" id="PF13863">
    <property type="entry name" value="DUF4200"/>
    <property type="match status" value="1"/>
</dbReference>
<comment type="function">
    <text evidence="2">As part of MIA, a complex associated with the outer doublet microtubules of the axoneme, may play a role in ciliary/flagellar motility by regulating the assembly and the activity of inner dynein arm.</text>
</comment>
<comment type="subunit">
    <text evidence="2">Interacts with FAP100; form the modifier of inner arm (MIA) complex.</text>
</comment>
<comment type="subcellular location">
    <subcellularLocation>
        <location evidence="2">Cytoplasm</location>
        <location evidence="2">Cytoskeleton</location>
        <location evidence="2">Flagellum axoneme</location>
    </subcellularLocation>
    <text evidence="2">Localizes to the outer doublet microtubules of the axoneme.</text>
</comment>
<comment type="disruption phenotype">
    <text evidence="2">The mia2 mutants do not express the protein in the axoneme and display slightly jerky, slow swimming phenotypes, reduced flagellar beat frequencies and defective phototaxis.</text>
</comment>
<comment type="similarity">
    <text evidence="4">Belongs to the CFAP73 family.</text>
</comment>
<gene>
    <name evidence="3" type="primary">FAP73</name>
    <name evidence="3" type="synonym">MIA2</name>
</gene>